<keyword id="KW-0687">Ribonucleoprotein</keyword>
<keyword id="KW-0689">Ribosomal protein</keyword>
<keyword id="KW-0694">RNA-binding</keyword>
<keyword id="KW-0699">rRNA-binding</keyword>
<protein>
    <recommendedName>
        <fullName evidence="1">Large ribosomal subunit protein uL6</fullName>
    </recommendedName>
    <alternativeName>
        <fullName evidence="2">50S ribosomal protein L6</fullName>
    </alternativeName>
</protein>
<comment type="function">
    <text evidence="1">This protein binds to the 23S rRNA, and is important in its secondary structure. It is located near the subunit interface in the base of the L7/L12 stalk, and near the tRNA binding site of the peptidyltransferase center.</text>
</comment>
<comment type="subunit">
    <text evidence="1">Part of the 50S ribosomal subunit.</text>
</comment>
<comment type="similarity">
    <text evidence="1">Belongs to the universal ribosomal protein uL6 family.</text>
</comment>
<gene>
    <name evidence="1" type="primary">rplF</name>
    <name type="ordered locus">STER_1892</name>
</gene>
<organism>
    <name type="scientific">Streptococcus thermophilus (strain ATCC BAA-491 / LMD-9)</name>
    <dbReference type="NCBI Taxonomy" id="322159"/>
    <lineage>
        <taxon>Bacteria</taxon>
        <taxon>Bacillati</taxon>
        <taxon>Bacillota</taxon>
        <taxon>Bacilli</taxon>
        <taxon>Lactobacillales</taxon>
        <taxon>Streptococcaceae</taxon>
        <taxon>Streptococcus</taxon>
    </lineage>
</organism>
<reference key="1">
    <citation type="journal article" date="2006" name="Proc. Natl. Acad. Sci. U.S.A.">
        <title>Comparative genomics of the lactic acid bacteria.</title>
        <authorList>
            <person name="Makarova K.S."/>
            <person name="Slesarev A."/>
            <person name="Wolf Y.I."/>
            <person name="Sorokin A."/>
            <person name="Mirkin B."/>
            <person name="Koonin E.V."/>
            <person name="Pavlov A."/>
            <person name="Pavlova N."/>
            <person name="Karamychev V."/>
            <person name="Polouchine N."/>
            <person name="Shakhova V."/>
            <person name="Grigoriev I."/>
            <person name="Lou Y."/>
            <person name="Rohksar D."/>
            <person name="Lucas S."/>
            <person name="Huang K."/>
            <person name="Goodstein D.M."/>
            <person name="Hawkins T."/>
            <person name="Plengvidhya V."/>
            <person name="Welker D."/>
            <person name="Hughes J."/>
            <person name="Goh Y."/>
            <person name="Benson A."/>
            <person name="Baldwin K."/>
            <person name="Lee J.-H."/>
            <person name="Diaz-Muniz I."/>
            <person name="Dosti B."/>
            <person name="Smeianov V."/>
            <person name="Wechter W."/>
            <person name="Barabote R."/>
            <person name="Lorca G."/>
            <person name="Altermann E."/>
            <person name="Barrangou R."/>
            <person name="Ganesan B."/>
            <person name="Xie Y."/>
            <person name="Rawsthorne H."/>
            <person name="Tamir D."/>
            <person name="Parker C."/>
            <person name="Breidt F."/>
            <person name="Broadbent J.R."/>
            <person name="Hutkins R."/>
            <person name="O'Sullivan D."/>
            <person name="Steele J."/>
            <person name="Unlu G."/>
            <person name="Saier M.H. Jr."/>
            <person name="Klaenhammer T."/>
            <person name="Richardson P."/>
            <person name="Kozyavkin S."/>
            <person name="Weimer B.C."/>
            <person name="Mills D.A."/>
        </authorList>
    </citation>
    <scope>NUCLEOTIDE SEQUENCE [LARGE SCALE GENOMIC DNA]</scope>
    <source>
        <strain>ATCC BAA-491 / LMD-9</strain>
    </source>
</reference>
<feature type="chain" id="PRO_1000055320" description="Large ribosomal subunit protein uL6">
    <location>
        <begin position="1"/>
        <end position="178"/>
    </location>
</feature>
<evidence type="ECO:0000255" key="1">
    <source>
        <dbReference type="HAMAP-Rule" id="MF_01365"/>
    </source>
</evidence>
<evidence type="ECO:0000305" key="2"/>
<dbReference type="EMBL" id="CP000419">
    <property type="protein sequence ID" value="ABJ67006.1"/>
    <property type="molecule type" value="Genomic_DNA"/>
</dbReference>
<dbReference type="RefSeq" id="WP_002946167.1">
    <property type="nucleotide sequence ID" value="NZ_CP086001.1"/>
</dbReference>
<dbReference type="SMR" id="Q03IG6"/>
<dbReference type="GeneID" id="66899647"/>
<dbReference type="KEGG" id="ste:STER_1892"/>
<dbReference type="HOGENOM" id="CLU_065464_1_2_9"/>
<dbReference type="GO" id="GO:0022625">
    <property type="term" value="C:cytosolic large ribosomal subunit"/>
    <property type="evidence" value="ECO:0007669"/>
    <property type="project" value="TreeGrafter"/>
</dbReference>
<dbReference type="GO" id="GO:0019843">
    <property type="term" value="F:rRNA binding"/>
    <property type="evidence" value="ECO:0007669"/>
    <property type="project" value="UniProtKB-UniRule"/>
</dbReference>
<dbReference type="GO" id="GO:0003735">
    <property type="term" value="F:structural constituent of ribosome"/>
    <property type="evidence" value="ECO:0007669"/>
    <property type="project" value="InterPro"/>
</dbReference>
<dbReference type="GO" id="GO:0002181">
    <property type="term" value="P:cytoplasmic translation"/>
    <property type="evidence" value="ECO:0007669"/>
    <property type="project" value="TreeGrafter"/>
</dbReference>
<dbReference type="FunFam" id="3.90.930.12:FF:000001">
    <property type="entry name" value="50S ribosomal protein L6"/>
    <property type="match status" value="1"/>
</dbReference>
<dbReference type="FunFam" id="3.90.930.12:FF:000002">
    <property type="entry name" value="50S ribosomal protein L6"/>
    <property type="match status" value="1"/>
</dbReference>
<dbReference type="Gene3D" id="3.90.930.12">
    <property type="entry name" value="Ribosomal protein L6, alpha-beta domain"/>
    <property type="match status" value="2"/>
</dbReference>
<dbReference type="HAMAP" id="MF_01365_B">
    <property type="entry name" value="Ribosomal_uL6_B"/>
    <property type="match status" value="1"/>
</dbReference>
<dbReference type="InterPro" id="IPR000702">
    <property type="entry name" value="Ribosomal_uL6-like"/>
</dbReference>
<dbReference type="InterPro" id="IPR036789">
    <property type="entry name" value="Ribosomal_uL6-like_a/b-dom_sf"/>
</dbReference>
<dbReference type="InterPro" id="IPR020040">
    <property type="entry name" value="Ribosomal_uL6_a/b-dom"/>
</dbReference>
<dbReference type="InterPro" id="IPR019906">
    <property type="entry name" value="Ribosomal_uL6_bac-type"/>
</dbReference>
<dbReference type="InterPro" id="IPR002358">
    <property type="entry name" value="Ribosomal_uL6_CS"/>
</dbReference>
<dbReference type="NCBIfam" id="TIGR03654">
    <property type="entry name" value="L6_bact"/>
    <property type="match status" value="1"/>
</dbReference>
<dbReference type="PANTHER" id="PTHR11655">
    <property type="entry name" value="60S/50S RIBOSOMAL PROTEIN L6/L9"/>
    <property type="match status" value="1"/>
</dbReference>
<dbReference type="PANTHER" id="PTHR11655:SF14">
    <property type="entry name" value="LARGE RIBOSOMAL SUBUNIT PROTEIN UL6M"/>
    <property type="match status" value="1"/>
</dbReference>
<dbReference type="Pfam" id="PF00347">
    <property type="entry name" value="Ribosomal_L6"/>
    <property type="match status" value="2"/>
</dbReference>
<dbReference type="PIRSF" id="PIRSF002162">
    <property type="entry name" value="Ribosomal_L6"/>
    <property type="match status" value="1"/>
</dbReference>
<dbReference type="PRINTS" id="PR00059">
    <property type="entry name" value="RIBOSOMALL6"/>
</dbReference>
<dbReference type="SUPFAM" id="SSF56053">
    <property type="entry name" value="Ribosomal protein L6"/>
    <property type="match status" value="2"/>
</dbReference>
<dbReference type="PROSITE" id="PS00525">
    <property type="entry name" value="RIBOSOMAL_L6_1"/>
    <property type="match status" value="1"/>
</dbReference>
<sequence length="178" mass="19458">MSRIGNKVITLPAGVEITNNDNVVTVKGPKGELTREFNKNIEIKVEGNEVTLHRPNDSKENKTIHGTSRANLNNMVVGVSEGFKKELEMHGVGYRAQLQGTKLVLSVGKSHQDEVEAPEGITFEVPSATSIVVSGINKEVVGQTAAYIRSLRSPEPYKGKGIRYVGEYVRRKEGKTGK</sequence>
<accession>Q03IG6</accession>
<proteinExistence type="inferred from homology"/>
<name>RL6_STRTD</name>